<keyword id="KW-0119">Carbohydrate metabolism</keyword>
<keyword id="KW-0320">Glycogen biosynthesis</keyword>
<keyword id="KW-0321">Glycogen metabolism</keyword>
<keyword id="KW-0328">Glycosyltransferase</keyword>
<keyword id="KW-1185">Reference proteome</keyword>
<keyword id="KW-0808">Transferase</keyword>
<accession>P9WMY9</accession>
<accession>L0TCY4</accession>
<accession>O53279</accession>
<accession>Q7D693</accession>
<feature type="chain" id="PRO_0000413905" description="Glycogen synthase">
    <location>
        <begin position="1"/>
        <end position="414"/>
    </location>
</feature>
<evidence type="ECO:0000269" key="1">
    <source>
    </source>
</evidence>
<evidence type="ECO:0000269" key="2">
    <source>
    </source>
</evidence>
<evidence type="ECO:0000269" key="3">
    <source>
    </source>
</evidence>
<evidence type="ECO:0000305" key="4"/>
<proteinExistence type="evidence at protein level"/>
<organism>
    <name type="scientific">Mycobacterium tuberculosis (strain ATCC 25618 / H37Rv)</name>
    <dbReference type="NCBI Taxonomy" id="83332"/>
    <lineage>
        <taxon>Bacteria</taxon>
        <taxon>Bacillati</taxon>
        <taxon>Actinomycetota</taxon>
        <taxon>Actinomycetes</taxon>
        <taxon>Mycobacteriales</taxon>
        <taxon>Mycobacteriaceae</taxon>
        <taxon>Mycobacterium</taxon>
        <taxon>Mycobacterium tuberculosis complex</taxon>
    </lineage>
</organism>
<protein>
    <recommendedName>
        <fullName>Glycogen synthase</fullName>
        <ecNumber>2.4.1.11</ecNumber>
    </recommendedName>
    <alternativeName>
        <fullName>Alpha-1,4-glucosyltransferase Rv3032</fullName>
    </alternativeName>
    <alternativeName>
        <fullName>UDP-glucose--glycogen glucosyltransferase</fullName>
    </alternativeName>
</protein>
<name>GLGSY_MYCTU</name>
<reference key="1">
    <citation type="journal article" date="1998" name="Nature">
        <title>Deciphering the biology of Mycobacterium tuberculosis from the complete genome sequence.</title>
        <authorList>
            <person name="Cole S.T."/>
            <person name="Brosch R."/>
            <person name="Parkhill J."/>
            <person name="Garnier T."/>
            <person name="Churcher C.M."/>
            <person name="Harris D.E."/>
            <person name="Gordon S.V."/>
            <person name="Eiglmeier K."/>
            <person name="Gas S."/>
            <person name="Barry C.E. III"/>
            <person name="Tekaia F."/>
            <person name="Badcock K."/>
            <person name="Basham D."/>
            <person name="Brown D."/>
            <person name="Chillingworth T."/>
            <person name="Connor R."/>
            <person name="Davies R.M."/>
            <person name="Devlin K."/>
            <person name="Feltwell T."/>
            <person name="Gentles S."/>
            <person name="Hamlin N."/>
            <person name="Holroyd S."/>
            <person name="Hornsby T."/>
            <person name="Jagels K."/>
            <person name="Krogh A."/>
            <person name="McLean J."/>
            <person name="Moule S."/>
            <person name="Murphy L.D."/>
            <person name="Oliver S."/>
            <person name="Osborne J."/>
            <person name="Quail M.A."/>
            <person name="Rajandream M.A."/>
            <person name="Rogers J."/>
            <person name="Rutter S."/>
            <person name="Seeger K."/>
            <person name="Skelton S."/>
            <person name="Squares S."/>
            <person name="Squares R."/>
            <person name="Sulston J.E."/>
            <person name="Taylor K."/>
            <person name="Whitehead S."/>
            <person name="Barrell B.G."/>
        </authorList>
    </citation>
    <scope>NUCLEOTIDE SEQUENCE [LARGE SCALE GENOMIC DNA]</scope>
    <source>
        <strain>ATCC 25618 / H37Rv</strain>
    </source>
</reference>
<reference key="2">
    <citation type="journal article" date="2007" name="J. Biol. Chem.">
        <title>Genetic basis for the biosynthesis of methylglucose lipopolysaccharides in Mycobacterium tuberculosis.</title>
        <authorList>
            <person name="Stadthagen G."/>
            <person name="Sambou T."/>
            <person name="Guerin M."/>
            <person name="Barilone N."/>
            <person name="Boudou F."/>
            <person name="Kordulakova J."/>
            <person name="Charles P."/>
            <person name="Alzari P.M."/>
            <person name="Lemassu A."/>
            <person name="Daffe M."/>
            <person name="Puzo G."/>
            <person name="Gicquel B."/>
            <person name="Riviere M."/>
            <person name="Jackson M."/>
        </authorList>
    </citation>
    <scope>FUNCTION IN MGLP AND GLYCOGEN BIOSYNTHESIS</scope>
    <scope>CATALYTIC ACTIVITY</scope>
    <scope>DISRUPTION PHENOTYPE</scope>
    <source>
        <strain>ATCC 25618 / H37Rv</strain>
    </source>
</reference>
<reference key="3">
    <citation type="journal article" date="2008" name="Mol. Microbiol.">
        <title>Capsular glucan and intracellular glycogen of Mycobacterium tuberculosis: biosynthesis and impact on the persistence in mice.</title>
        <authorList>
            <person name="Sambou T."/>
            <person name="Dinadayala P."/>
            <person name="Stadthagen G."/>
            <person name="Barilone N."/>
            <person name="Bordat Y."/>
            <person name="Constant P."/>
            <person name="Levillain F."/>
            <person name="Neyrolles O."/>
            <person name="Gicquel B."/>
            <person name="Lemassu A."/>
            <person name="Daffe M."/>
            <person name="Jackson M."/>
        </authorList>
    </citation>
    <scope>FUNCTION IN GLYCOGEN BIOSYNTHESIS</scope>
    <scope>DISRUPTION PHENOTYPE</scope>
    <scope>PATHWAY</scope>
    <source>
        <strain>ATCC 25618 / H37Rv</strain>
    </source>
</reference>
<reference key="4">
    <citation type="journal article" date="2010" name="Nat. Chem. Biol.">
        <title>Self-poisoning of Mycobacterium tuberculosis by targeting GlgE in an alpha-glucan pathway.</title>
        <authorList>
            <person name="Kalscheuer R."/>
            <person name="Syson K."/>
            <person name="Veeraraghavan U."/>
            <person name="Weinrick B."/>
            <person name="Biermann K.E."/>
            <person name="Liu Z."/>
            <person name="Sacchettini J.C."/>
            <person name="Besra G."/>
            <person name="Bornemann S."/>
            <person name="Jacobs W.R. Jr."/>
        </authorList>
    </citation>
    <scope>DISRUPTION PHENOTYPE</scope>
    <scope>SYNTHETIC LETHALITY</scope>
    <source>
        <strain>ATCC 25618 / H37Rv</strain>
    </source>
</reference>
<reference key="5">
    <citation type="journal article" date="2011" name="Mol. Cell. Proteomics">
        <title>Proteogenomic analysis of Mycobacterium tuberculosis by high resolution mass spectrometry.</title>
        <authorList>
            <person name="Kelkar D.S."/>
            <person name="Kumar D."/>
            <person name="Kumar P."/>
            <person name="Balakrishnan L."/>
            <person name="Muthusamy B."/>
            <person name="Yadav A.K."/>
            <person name="Shrivastava P."/>
            <person name="Marimuthu A."/>
            <person name="Anand S."/>
            <person name="Sundaram H."/>
            <person name="Kingsbury R."/>
            <person name="Harsha H.C."/>
            <person name="Nair B."/>
            <person name="Prasad T.S."/>
            <person name="Chauhan D.S."/>
            <person name="Katoch K."/>
            <person name="Katoch V.M."/>
            <person name="Kumar P."/>
            <person name="Chaerkady R."/>
            <person name="Ramachandran S."/>
            <person name="Dash D."/>
            <person name="Pandey A."/>
        </authorList>
    </citation>
    <scope>IDENTIFICATION BY MASS SPECTROMETRY [LARGE SCALE ANALYSIS]</scope>
    <source>
        <strain>ATCC 25618 / H37Rv</strain>
    </source>
</reference>
<dbReference type="EC" id="2.4.1.11"/>
<dbReference type="EMBL" id="AL123456">
    <property type="protein sequence ID" value="CCP45840.1"/>
    <property type="molecule type" value="Genomic_DNA"/>
</dbReference>
<dbReference type="PIR" id="C70859">
    <property type="entry name" value="C70859"/>
</dbReference>
<dbReference type="RefSeq" id="NP_217548.1">
    <property type="nucleotide sequence ID" value="NC_000962.3"/>
</dbReference>
<dbReference type="RefSeq" id="WP_003415928.1">
    <property type="nucleotide sequence ID" value="NZ_NVQJ01000011.1"/>
</dbReference>
<dbReference type="SMR" id="P9WMY9"/>
<dbReference type="FunCoup" id="P9WMY9">
    <property type="interactions" value="344"/>
</dbReference>
<dbReference type="STRING" id="83332.Rv3032"/>
<dbReference type="PaxDb" id="83332-Rv3032"/>
<dbReference type="DNASU" id="888185"/>
<dbReference type="GeneID" id="888185"/>
<dbReference type="KEGG" id="mtu:Rv3032"/>
<dbReference type="KEGG" id="mtv:RVBD_3032"/>
<dbReference type="TubercuList" id="Rv3032"/>
<dbReference type="eggNOG" id="COG0297">
    <property type="taxonomic scope" value="Bacteria"/>
</dbReference>
<dbReference type="InParanoid" id="P9WMY9"/>
<dbReference type="OrthoDB" id="6286688at2"/>
<dbReference type="PhylomeDB" id="P9WMY9"/>
<dbReference type="UniPathway" id="UPA00164"/>
<dbReference type="Proteomes" id="UP000001584">
    <property type="component" value="Chromosome"/>
</dbReference>
<dbReference type="GO" id="GO:0004373">
    <property type="term" value="F:alpha-1,4-glucan glucosyltransferase (UDP-glucose donor) activity"/>
    <property type="evidence" value="ECO:0007669"/>
    <property type="project" value="UniProtKB-EC"/>
</dbReference>
<dbReference type="GO" id="GO:0016757">
    <property type="term" value="F:glycosyltransferase activity"/>
    <property type="evidence" value="ECO:0000318"/>
    <property type="project" value="GO_Central"/>
</dbReference>
<dbReference type="GO" id="GO:0005978">
    <property type="term" value="P:glycogen biosynthetic process"/>
    <property type="evidence" value="ECO:0000315"/>
    <property type="project" value="MTBBASE"/>
</dbReference>
<dbReference type="GO" id="GO:0009103">
    <property type="term" value="P:lipopolysaccharide biosynthetic process"/>
    <property type="evidence" value="ECO:0000315"/>
    <property type="project" value="MTBBASE"/>
</dbReference>
<dbReference type="CDD" id="cd03801">
    <property type="entry name" value="GT4_PimA-like"/>
    <property type="match status" value="1"/>
</dbReference>
<dbReference type="FunFam" id="3.40.50.2000:FF:000220">
    <property type="entry name" value="Glycogen synthase"/>
    <property type="match status" value="1"/>
</dbReference>
<dbReference type="FunFam" id="3.40.50.2000:FF:000242">
    <property type="entry name" value="Glycogen synthase"/>
    <property type="match status" value="1"/>
</dbReference>
<dbReference type="Gene3D" id="3.40.50.2000">
    <property type="entry name" value="Glycogen Phosphorylase B"/>
    <property type="match status" value="2"/>
</dbReference>
<dbReference type="InterPro" id="IPR001296">
    <property type="entry name" value="Glyco_trans_1"/>
</dbReference>
<dbReference type="InterPro" id="IPR028098">
    <property type="entry name" value="Glyco_trans_4-like_N"/>
</dbReference>
<dbReference type="InterPro" id="IPR050194">
    <property type="entry name" value="Glycosyltransferase_grp1"/>
</dbReference>
<dbReference type="PANTHER" id="PTHR45947">
    <property type="entry name" value="SULFOQUINOVOSYL TRANSFERASE SQD2"/>
    <property type="match status" value="1"/>
</dbReference>
<dbReference type="PANTHER" id="PTHR45947:SF3">
    <property type="entry name" value="SULFOQUINOVOSYL TRANSFERASE SQD2"/>
    <property type="match status" value="1"/>
</dbReference>
<dbReference type="Pfam" id="PF13439">
    <property type="entry name" value="Glyco_transf_4"/>
    <property type="match status" value="1"/>
</dbReference>
<dbReference type="Pfam" id="PF00534">
    <property type="entry name" value="Glycos_transf_1"/>
    <property type="match status" value="1"/>
</dbReference>
<dbReference type="SUPFAM" id="SSF53756">
    <property type="entry name" value="UDP-Glycosyltransferase/glycogen phosphorylase"/>
    <property type="match status" value="1"/>
</dbReference>
<comment type="function">
    <text evidence="1 2">Glucosyltransferase that uses UDP-glucose as the sugar donor to elongate alpha-(1-&gt;4)-glucans. Is involved in the biosynthesis of both 6-O-methylglucosyl lipopolysaccharides (MGLP) and glycogen. May also use ADP-glucose as substrate.</text>
</comment>
<comment type="catalytic activity">
    <reaction evidence="1">
        <text>[(1-&gt;4)-alpha-D-glucosyl](n) + UDP-alpha-D-glucose = [(1-&gt;4)-alpha-D-glucosyl](n+1) + UDP + H(+)</text>
        <dbReference type="Rhea" id="RHEA:18549"/>
        <dbReference type="Rhea" id="RHEA-COMP:9584"/>
        <dbReference type="Rhea" id="RHEA-COMP:9587"/>
        <dbReference type="ChEBI" id="CHEBI:15378"/>
        <dbReference type="ChEBI" id="CHEBI:15444"/>
        <dbReference type="ChEBI" id="CHEBI:58223"/>
        <dbReference type="ChEBI" id="CHEBI:58885"/>
        <dbReference type="EC" id="2.4.1.11"/>
    </reaction>
</comment>
<comment type="pathway">
    <text evidence="2">Glycan biosynthesis; glycogen biosynthesis.</text>
</comment>
<comment type="disruption phenotype">
    <text evidence="1 2 3">Inactivation of Rv3032 affects the production of both glycogen (two-fold reduction) and 6-O-methylglucosyl lipopolysaccharides (MGLP), but not that of capsular alpha-D-glucan. Cells lacking this gene are not affected in their multiplication or persistence in the BALB/c mouse infection model. They also show a slightly slower growth than that of wild-type at 37 degrees Celsius and a completely abolished growth at 39 degrees Celsius. Moreover, in contrast to wild-type, they are exceptionally sensitive to the TreS inhibitor validamycin A; the sensitivity is abolished by overexpression of TreS.</text>
</comment>
<comment type="miscellaneous">
    <text>Attempts to disrupt both the Rv3032 gene and glgA in order to create a mutant simultaneously deficient in both alpha-1,4-glucosyltransferases turned out to be unsuccessful. Thus, M.tuberculosis H37Rv requires a functional copy of at least one of these two genes for growth. Moreover, it is not possible to inactivate Rv3032 in a mutant lacking treS, suggesting the joint essentiality of the different alpha-(1-&gt;4)-glucans biosynthesis pathways involving these two genes.</text>
</comment>
<comment type="similarity">
    <text evidence="4">Belongs to the glycosyltransferase group 1 family.</text>
</comment>
<gene>
    <name type="ordered locus">Rv3032</name>
</gene>
<sequence>MRILMVSWEYPPVVIGGLGRHVHHLSTALAAAGHDVVVLSRCPSGTDPSTHPSSDEVTEGVRVIAAAQDPHEFTFGNDMMAWTLAMGHAMIRAGLRLKKLGTDRSWRPDVVHAHDWLVAHPAIALAQFYDVPMVSTIHATEAGRHSGWVSGALSRQVHAVESWLVRESDSLITCSASMNDEITELFGPGLAEITVIRNGIDAARWPFAARRPRTGPAELLYVGRLEYEKGVHDAIAALPRLRRTHPGTTLTIAGEGTQQDWLIDQARKHRVLRATRFVGHLDHTELLALLHRADAAVLPSHYEPFGLVALEAAAAGTPLVTSNIGGLGEAVINGQTGVSCAPRDVAGLAAAVRSVLDDPAAAQRRARAARQRLTSDFDWQTVATATAQVYLAAKRGERQPQPRLPIVEHALPDR</sequence>